<keyword id="KW-0963">Cytoplasm</keyword>
<keyword id="KW-0274">FAD</keyword>
<keyword id="KW-0285">Flavoprotein</keyword>
<keyword id="KW-0547">Nucleotide-binding</keyword>
<keyword id="KW-0560">Oxidoreductase</keyword>
<keyword id="KW-0662">Pyridine nucleotide biosynthesis</keyword>
<keyword id="KW-1185">Reference proteome</keyword>
<name>NADB_SACS2</name>
<sequence length="472" mass="52645">MIYIFGSGLAGLSAAISLHKSGYKVTIISKKINGGSSYWAKGGIAAAVGNDDSPELHKIDTLEVGDGLCDSKTVDYVTREIRYVVSTVEKWGFKFDDDLRLEGGHSKRRILHKTDDTGREITNFLLNLAKKKGINLIEDKLLALKVKDGKVAGFITEKGGSFDAEKVVLATGGYGYLFKFTSNPSTNIGDGIAIAFKAGALVSDTEFVQFHPTVTTFDGQAYLLTETLRGEGAILVNERNERFVFKYDSRGELAPRDVLSRAIYDQYKKGHTVYIDLSPIEDFDRKFPILSNYVKRYGKRLQVFPGVHYTIGGIRVNTRGESNIKGLYAIGEVTDTGLHGANRLASNSLAEDLVYGVNLVRYIDNWEGLSIDDVKEVIEVRLRNSSNRLSLEEIREYNWNYLGIVRNGEGLDKLVKIYESNDTFNDNASLVSLLSAKGALLRTESRGAHYREDYPNKSWEDGKRIYFMVSRN</sequence>
<proteinExistence type="inferred from homology"/>
<dbReference type="EC" id="1.4.3.16" evidence="1"/>
<dbReference type="EMBL" id="AE006641">
    <property type="protein sequence ID" value="AAK41268.1"/>
    <property type="status" value="ALT_INIT"/>
    <property type="molecule type" value="Genomic_DNA"/>
</dbReference>
<dbReference type="PIR" id="E90251">
    <property type="entry name" value="E90251"/>
</dbReference>
<dbReference type="RefSeq" id="WP_009989244.1">
    <property type="nucleotide sequence ID" value="NC_002754.1"/>
</dbReference>
<dbReference type="SMR" id="Q97ZC5"/>
<dbReference type="FunCoup" id="Q97ZC5">
    <property type="interactions" value="118"/>
</dbReference>
<dbReference type="STRING" id="273057.SSO0997"/>
<dbReference type="PaxDb" id="273057-SSO0997"/>
<dbReference type="EnsemblBacteria" id="AAK41268">
    <property type="protein sequence ID" value="AAK41268"/>
    <property type="gene ID" value="SSO0997"/>
</dbReference>
<dbReference type="KEGG" id="sso:SSO0997"/>
<dbReference type="PATRIC" id="fig|273057.12.peg.994"/>
<dbReference type="eggNOG" id="arCOG00572">
    <property type="taxonomic scope" value="Archaea"/>
</dbReference>
<dbReference type="HOGENOM" id="CLU_014312_3_2_2"/>
<dbReference type="InParanoid" id="Q97ZC5"/>
<dbReference type="PhylomeDB" id="Q97ZC5"/>
<dbReference type="UniPathway" id="UPA00253">
    <property type="reaction ID" value="UER00326"/>
</dbReference>
<dbReference type="Proteomes" id="UP000001974">
    <property type="component" value="Chromosome"/>
</dbReference>
<dbReference type="GO" id="GO:0005737">
    <property type="term" value="C:cytoplasm"/>
    <property type="evidence" value="ECO:0007669"/>
    <property type="project" value="UniProtKB-SubCell"/>
</dbReference>
<dbReference type="GO" id="GO:0008734">
    <property type="term" value="F:L-aspartate oxidase activity"/>
    <property type="evidence" value="ECO:0007669"/>
    <property type="project" value="UniProtKB-EC"/>
</dbReference>
<dbReference type="GO" id="GO:0000166">
    <property type="term" value="F:nucleotide binding"/>
    <property type="evidence" value="ECO:0007669"/>
    <property type="project" value="UniProtKB-KW"/>
</dbReference>
<dbReference type="GO" id="GO:0009435">
    <property type="term" value="P:NAD biosynthetic process"/>
    <property type="evidence" value="ECO:0007669"/>
    <property type="project" value="UniProtKB-UniPathway"/>
</dbReference>
<dbReference type="Gene3D" id="3.50.50.60">
    <property type="entry name" value="FAD/NAD(P)-binding domain"/>
    <property type="match status" value="1"/>
</dbReference>
<dbReference type="Gene3D" id="1.20.58.100">
    <property type="entry name" value="Fumarate reductase/succinate dehydrogenase flavoprotein-like, C-terminal domain"/>
    <property type="match status" value="1"/>
</dbReference>
<dbReference type="Gene3D" id="3.90.700.10">
    <property type="entry name" value="Succinate dehydrogenase/fumarate reductase flavoprotein, catalytic domain"/>
    <property type="match status" value="1"/>
</dbReference>
<dbReference type="InterPro" id="IPR003953">
    <property type="entry name" value="FAD-dep_OxRdtase_2_FAD-bd"/>
</dbReference>
<dbReference type="InterPro" id="IPR036188">
    <property type="entry name" value="FAD/NAD-bd_sf"/>
</dbReference>
<dbReference type="InterPro" id="IPR037099">
    <property type="entry name" value="Fum_R/Succ_DH_flav-like_C_sf"/>
</dbReference>
<dbReference type="InterPro" id="IPR015939">
    <property type="entry name" value="Fum_Rdtase/Succ_DH_flav-like_C"/>
</dbReference>
<dbReference type="InterPro" id="IPR005288">
    <property type="entry name" value="NadB"/>
</dbReference>
<dbReference type="InterPro" id="IPR027477">
    <property type="entry name" value="Succ_DH/fumarate_Rdtase_cat_sf"/>
</dbReference>
<dbReference type="PANTHER" id="PTHR42716">
    <property type="entry name" value="L-ASPARTATE OXIDASE"/>
    <property type="match status" value="1"/>
</dbReference>
<dbReference type="PANTHER" id="PTHR42716:SF2">
    <property type="entry name" value="L-ASPARTATE OXIDASE, CHLOROPLASTIC"/>
    <property type="match status" value="1"/>
</dbReference>
<dbReference type="Pfam" id="PF00890">
    <property type="entry name" value="FAD_binding_2"/>
    <property type="match status" value="1"/>
</dbReference>
<dbReference type="Pfam" id="PF02910">
    <property type="entry name" value="Succ_DH_flav_C"/>
    <property type="match status" value="1"/>
</dbReference>
<dbReference type="PRINTS" id="PR00368">
    <property type="entry name" value="FADPNR"/>
</dbReference>
<dbReference type="SUPFAM" id="SSF51905">
    <property type="entry name" value="FAD/NAD(P)-binding domain"/>
    <property type="match status" value="1"/>
</dbReference>
<dbReference type="SUPFAM" id="SSF46977">
    <property type="entry name" value="Succinate dehydrogenase/fumarate reductase flavoprotein C-terminal domain"/>
    <property type="match status" value="1"/>
</dbReference>
<dbReference type="SUPFAM" id="SSF56425">
    <property type="entry name" value="Succinate dehydrogenase/fumarate reductase flavoprotein, catalytic domain"/>
    <property type="match status" value="1"/>
</dbReference>
<gene>
    <name type="primary">nadB</name>
    <name type="ordered locus">SSO0997</name>
</gene>
<protein>
    <recommendedName>
        <fullName evidence="1">L-aspartate oxidase</fullName>
        <shortName evidence="1">LASPO</shortName>
        <ecNumber evidence="1">1.4.3.16</ecNumber>
    </recommendedName>
    <alternativeName>
        <fullName>Quinolinate synthase B</fullName>
    </alternativeName>
</protein>
<feature type="chain" id="PRO_0000184411" description="L-aspartate oxidase">
    <location>
        <begin position="1"/>
        <end position="472"/>
    </location>
</feature>
<feature type="active site" description="Proton donor/acceptor" evidence="1">
    <location>
        <position position="256"/>
    </location>
</feature>
<feature type="binding site" evidence="1">
    <location>
        <begin position="7"/>
        <end position="10"/>
    </location>
    <ligand>
        <name>FAD</name>
        <dbReference type="ChEBI" id="CHEBI:57692"/>
    </ligand>
</feature>
<feature type="binding site" evidence="1">
    <location>
        <begin position="36"/>
        <end position="43"/>
    </location>
    <ligand>
        <name>FAD</name>
        <dbReference type="ChEBI" id="CHEBI:57692"/>
    </ligand>
</feature>
<feature type="binding site" evidence="1">
    <location>
        <position position="190"/>
    </location>
    <ligand>
        <name>FAD</name>
        <dbReference type="ChEBI" id="CHEBI:57692"/>
    </ligand>
</feature>
<feature type="binding site" evidence="1">
    <location>
        <position position="332"/>
    </location>
    <ligand>
        <name>FAD</name>
        <dbReference type="ChEBI" id="CHEBI:57692"/>
    </ligand>
</feature>
<feature type="binding site" evidence="1">
    <location>
        <begin position="348"/>
        <end position="349"/>
    </location>
    <ligand>
        <name>FAD</name>
        <dbReference type="ChEBI" id="CHEBI:57692"/>
    </ligand>
</feature>
<feature type="site" description="Important in orienting the L-aspartate substrate" evidence="1">
    <location>
        <position position="102"/>
    </location>
</feature>
<accession>Q97ZC5</accession>
<reference key="1">
    <citation type="journal article" date="2001" name="Proc. Natl. Acad. Sci. U.S.A.">
        <title>The complete genome of the crenarchaeon Sulfolobus solfataricus P2.</title>
        <authorList>
            <person name="She Q."/>
            <person name="Singh R.K."/>
            <person name="Confalonieri F."/>
            <person name="Zivanovic Y."/>
            <person name="Allard G."/>
            <person name="Awayez M.J."/>
            <person name="Chan-Weiher C.C.-Y."/>
            <person name="Clausen I.G."/>
            <person name="Curtis B.A."/>
            <person name="De Moors A."/>
            <person name="Erauso G."/>
            <person name="Fletcher C."/>
            <person name="Gordon P.M.K."/>
            <person name="Heikamp-de Jong I."/>
            <person name="Jeffries A.C."/>
            <person name="Kozera C.J."/>
            <person name="Medina N."/>
            <person name="Peng X."/>
            <person name="Thi-Ngoc H.P."/>
            <person name="Redder P."/>
            <person name="Schenk M.E."/>
            <person name="Theriault C."/>
            <person name="Tolstrup N."/>
            <person name="Charlebois R.L."/>
            <person name="Doolittle W.F."/>
            <person name="Duguet M."/>
            <person name="Gaasterland T."/>
            <person name="Garrett R.A."/>
            <person name="Ragan M.A."/>
            <person name="Sensen C.W."/>
            <person name="Van der Oost J."/>
        </authorList>
    </citation>
    <scope>NUCLEOTIDE SEQUENCE [LARGE SCALE GENOMIC DNA]</scope>
    <source>
        <strain>ATCC 35092 / DSM 1617 / JCM 11322 / P2</strain>
    </source>
</reference>
<comment type="function">
    <text evidence="1">Catalyzes the oxidation of L-aspartate to iminoaspartate, the first step in the de novo biosynthesis of NAD(+).</text>
</comment>
<comment type="catalytic activity">
    <reaction evidence="1">
        <text>L-aspartate + O2 = iminosuccinate + H2O2</text>
        <dbReference type="Rhea" id="RHEA:25876"/>
        <dbReference type="ChEBI" id="CHEBI:15379"/>
        <dbReference type="ChEBI" id="CHEBI:16240"/>
        <dbReference type="ChEBI" id="CHEBI:29991"/>
        <dbReference type="ChEBI" id="CHEBI:77875"/>
        <dbReference type="EC" id="1.4.3.16"/>
    </reaction>
    <physiologicalReaction direction="left-to-right" evidence="1">
        <dbReference type="Rhea" id="RHEA:25877"/>
    </physiologicalReaction>
</comment>
<comment type="cofactor">
    <cofactor evidence="1">
        <name>FAD</name>
        <dbReference type="ChEBI" id="CHEBI:57692"/>
    </cofactor>
    <text evidence="1">Binds 1 FAD per subunit.</text>
</comment>
<comment type="pathway">
    <text evidence="1">Cofactor biosynthesis; NAD(+) biosynthesis; iminoaspartate from L-aspartate (oxidase route): step 1/1.</text>
</comment>
<comment type="subcellular location">
    <subcellularLocation>
        <location evidence="1">Cytoplasm</location>
    </subcellularLocation>
</comment>
<comment type="similarity">
    <text evidence="2">Belongs to the FAD-dependent oxidoreductase 2 family. NadB subfamily.</text>
</comment>
<comment type="sequence caution" evidence="2">
    <conflict type="erroneous initiation">
        <sequence resource="EMBL-CDS" id="AAK41268"/>
    </conflict>
</comment>
<organism>
    <name type="scientific">Saccharolobus solfataricus (strain ATCC 35092 / DSM 1617 / JCM 11322 / P2)</name>
    <name type="common">Sulfolobus solfataricus</name>
    <dbReference type="NCBI Taxonomy" id="273057"/>
    <lineage>
        <taxon>Archaea</taxon>
        <taxon>Thermoproteota</taxon>
        <taxon>Thermoprotei</taxon>
        <taxon>Sulfolobales</taxon>
        <taxon>Sulfolobaceae</taxon>
        <taxon>Saccharolobus</taxon>
    </lineage>
</organism>
<evidence type="ECO:0000250" key="1">
    <source>
        <dbReference type="UniProtKB" id="P10902"/>
    </source>
</evidence>
<evidence type="ECO:0000305" key="2"/>